<proteinExistence type="inferred from homology"/>
<gene>
    <name evidence="1" type="primary">mntP</name>
    <name type="synonym">yebN</name>
    <name type="ordered locus">ECED1_2024</name>
</gene>
<dbReference type="EMBL" id="CU928162">
    <property type="protein sequence ID" value="CAR08216.2"/>
    <property type="molecule type" value="Genomic_DNA"/>
</dbReference>
<dbReference type="RefSeq" id="WP_001296134.1">
    <property type="nucleotide sequence ID" value="NC_011745.1"/>
</dbReference>
<dbReference type="GeneID" id="93776070"/>
<dbReference type="KEGG" id="ecq:ECED1_2024"/>
<dbReference type="HOGENOM" id="CLU_096410_0_0_6"/>
<dbReference type="Proteomes" id="UP000000748">
    <property type="component" value="Chromosome"/>
</dbReference>
<dbReference type="GO" id="GO:0005886">
    <property type="term" value="C:plasma membrane"/>
    <property type="evidence" value="ECO:0007669"/>
    <property type="project" value="UniProtKB-SubCell"/>
</dbReference>
<dbReference type="GO" id="GO:0005384">
    <property type="term" value="F:manganese ion transmembrane transporter activity"/>
    <property type="evidence" value="ECO:0007669"/>
    <property type="project" value="UniProtKB-UniRule"/>
</dbReference>
<dbReference type="HAMAP" id="MF_01521">
    <property type="entry name" value="MntP_pump"/>
    <property type="match status" value="1"/>
</dbReference>
<dbReference type="InterPro" id="IPR003810">
    <property type="entry name" value="Mntp/YtaF"/>
</dbReference>
<dbReference type="InterPro" id="IPR022929">
    <property type="entry name" value="Put_MntP"/>
</dbReference>
<dbReference type="NCBIfam" id="NF008546">
    <property type="entry name" value="PRK11469.1"/>
    <property type="match status" value="1"/>
</dbReference>
<dbReference type="PANTHER" id="PTHR35529">
    <property type="entry name" value="MANGANESE EFFLUX PUMP MNTP-RELATED"/>
    <property type="match status" value="1"/>
</dbReference>
<dbReference type="PANTHER" id="PTHR35529:SF1">
    <property type="entry name" value="MANGANESE EFFLUX PUMP MNTP-RELATED"/>
    <property type="match status" value="1"/>
</dbReference>
<dbReference type="Pfam" id="PF02659">
    <property type="entry name" value="Mntp"/>
    <property type="match status" value="1"/>
</dbReference>
<evidence type="ECO:0000255" key="1">
    <source>
        <dbReference type="HAMAP-Rule" id="MF_01521"/>
    </source>
</evidence>
<reference key="1">
    <citation type="journal article" date="2009" name="PLoS Genet.">
        <title>Organised genome dynamics in the Escherichia coli species results in highly diverse adaptive paths.</title>
        <authorList>
            <person name="Touchon M."/>
            <person name="Hoede C."/>
            <person name="Tenaillon O."/>
            <person name="Barbe V."/>
            <person name="Baeriswyl S."/>
            <person name="Bidet P."/>
            <person name="Bingen E."/>
            <person name="Bonacorsi S."/>
            <person name="Bouchier C."/>
            <person name="Bouvet O."/>
            <person name="Calteau A."/>
            <person name="Chiapello H."/>
            <person name="Clermont O."/>
            <person name="Cruveiller S."/>
            <person name="Danchin A."/>
            <person name="Diard M."/>
            <person name="Dossat C."/>
            <person name="Karoui M.E."/>
            <person name="Frapy E."/>
            <person name="Garry L."/>
            <person name="Ghigo J.M."/>
            <person name="Gilles A.M."/>
            <person name="Johnson J."/>
            <person name="Le Bouguenec C."/>
            <person name="Lescat M."/>
            <person name="Mangenot S."/>
            <person name="Martinez-Jehanne V."/>
            <person name="Matic I."/>
            <person name="Nassif X."/>
            <person name="Oztas S."/>
            <person name="Petit M.A."/>
            <person name="Pichon C."/>
            <person name="Rouy Z."/>
            <person name="Ruf C.S."/>
            <person name="Schneider D."/>
            <person name="Tourret J."/>
            <person name="Vacherie B."/>
            <person name="Vallenet D."/>
            <person name="Medigue C."/>
            <person name="Rocha E.P.C."/>
            <person name="Denamur E."/>
        </authorList>
    </citation>
    <scope>NUCLEOTIDE SEQUENCE [LARGE SCALE GENOMIC DNA]</scope>
    <source>
        <strain>ED1a</strain>
    </source>
</reference>
<sequence length="188" mass="20117">MNITATVLLAFGMSMDAFAASIGKGATLHKPKFSEALRTGLIFGAVETLTPLIGWGMGMLASRFVLEWNHWIAFVLLIFLGGRMIIEGFRGADDEDEEPRRRHGFWLLVTTAIATSLDAMAVGVGLAFLQVNIIATALAIGCATLIMSTLGMMVGRFIGSIIGKKAEILGGLVLIGIGVQILWTHFHG</sequence>
<accession>B7MVV0</accession>
<comment type="function">
    <text evidence="1">Probably functions as a manganese efflux pump.</text>
</comment>
<comment type="subcellular location">
    <subcellularLocation>
        <location evidence="1">Cell inner membrane</location>
        <topology evidence="1">Multi-pass membrane protein</topology>
    </subcellularLocation>
</comment>
<comment type="similarity">
    <text evidence="1">Belongs to the MntP (TC 9.B.29) family.</text>
</comment>
<protein>
    <recommendedName>
        <fullName evidence="1">Probable manganese efflux pump MntP</fullName>
    </recommendedName>
</protein>
<name>MNTP_ECO81</name>
<feature type="chain" id="PRO_1000185110" description="Probable manganese efflux pump MntP">
    <location>
        <begin position="1"/>
        <end position="188"/>
    </location>
</feature>
<feature type="transmembrane region" description="Helical" evidence="1">
    <location>
        <begin position="3"/>
        <end position="23"/>
    </location>
</feature>
<feature type="transmembrane region" description="Helical" evidence="1">
    <location>
        <begin position="66"/>
        <end position="86"/>
    </location>
</feature>
<feature type="transmembrane region" description="Helical" evidence="1">
    <location>
        <begin position="106"/>
        <end position="128"/>
    </location>
</feature>
<feature type="transmembrane region" description="Helical" evidence="1">
    <location>
        <begin position="143"/>
        <end position="163"/>
    </location>
</feature>
<feature type="transmembrane region" description="Helical" evidence="1">
    <location>
        <begin position="168"/>
        <end position="188"/>
    </location>
</feature>
<keyword id="KW-0997">Cell inner membrane</keyword>
<keyword id="KW-1003">Cell membrane</keyword>
<keyword id="KW-0406">Ion transport</keyword>
<keyword id="KW-0464">Manganese</keyword>
<keyword id="KW-0472">Membrane</keyword>
<keyword id="KW-0812">Transmembrane</keyword>
<keyword id="KW-1133">Transmembrane helix</keyword>
<keyword id="KW-0813">Transport</keyword>
<organism>
    <name type="scientific">Escherichia coli O81 (strain ED1a)</name>
    <dbReference type="NCBI Taxonomy" id="585397"/>
    <lineage>
        <taxon>Bacteria</taxon>
        <taxon>Pseudomonadati</taxon>
        <taxon>Pseudomonadota</taxon>
        <taxon>Gammaproteobacteria</taxon>
        <taxon>Enterobacterales</taxon>
        <taxon>Enterobacteriaceae</taxon>
        <taxon>Escherichia</taxon>
    </lineage>
</organism>